<accession>Q9I244</accession>
<evidence type="ECO:0000255" key="1">
    <source>
        <dbReference type="HAMAP-Rule" id="MF_00054"/>
    </source>
</evidence>
<evidence type="ECO:0000256" key="2">
    <source>
        <dbReference type="SAM" id="MobiDB-lite"/>
    </source>
</evidence>
<organism>
    <name type="scientific">Pseudomonas aeruginosa (strain ATCC 15692 / DSM 22644 / CIP 104116 / JCM 14847 / LMG 12228 / 1C / PRS 101 / PAO1)</name>
    <dbReference type="NCBI Taxonomy" id="208964"/>
    <lineage>
        <taxon>Bacteria</taxon>
        <taxon>Pseudomonadati</taxon>
        <taxon>Pseudomonadota</taxon>
        <taxon>Gammaproteobacteria</taxon>
        <taxon>Pseudomonadales</taxon>
        <taxon>Pseudomonadaceae</taxon>
        <taxon>Pseudomonas</taxon>
    </lineage>
</organism>
<protein>
    <recommendedName>
        <fullName evidence="1">Elongation factor G 2</fullName>
        <shortName evidence="1">EF-G 2</shortName>
    </recommendedName>
</protein>
<name>EFG2_PSEAE</name>
<reference key="1">
    <citation type="journal article" date="2000" name="Nature">
        <title>Complete genome sequence of Pseudomonas aeruginosa PAO1, an opportunistic pathogen.</title>
        <authorList>
            <person name="Stover C.K."/>
            <person name="Pham X.-Q.T."/>
            <person name="Erwin A.L."/>
            <person name="Mizoguchi S.D."/>
            <person name="Warrener P."/>
            <person name="Hickey M.J."/>
            <person name="Brinkman F.S.L."/>
            <person name="Hufnagle W.O."/>
            <person name="Kowalik D.J."/>
            <person name="Lagrou M."/>
            <person name="Garber R.L."/>
            <person name="Goltry L."/>
            <person name="Tolentino E."/>
            <person name="Westbrock-Wadman S."/>
            <person name="Yuan Y."/>
            <person name="Brody L.L."/>
            <person name="Coulter S.N."/>
            <person name="Folger K.R."/>
            <person name="Kas A."/>
            <person name="Larbig K."/>
            <person name="Lim R.M."/>
            <person name="Smith K.A."/>
            <person name="Spencer D.H."/>
            <person name="Wong G.K.-S."/>
            <person name="Wu Z."/>
            <person name="Paulsen I.T."/>
            <person name="Reizer J."/>
            <person name="Saier M.H. Jr."/>
            <person name="Hancock R.E.W."/>
            <person name="Lory S."/>
            <person name="Olson M.V."/>
        </authorList>
    </citation>
    <scope>NUCLEOTIDE SEQUENCE [LARGE SCALE GENOMIC DNA]</scope>
    <source>
        <strain>ATCC 15692 / DSM 22644 / CIP 104116 / JCM 14847 / LMG 12228 / 1C / PRS 101 / PAO1</strain>
    </source>
</reference>
<feature type="chain" id="PRO_0000091185" description="Elongation factor G 2">
    <location>
        <begin position="1"/>
        <end position="702"/>
    </location>
</feature>
<feature type="domain" description="tr-type G">
    <location>
        <begin position="8"/>
        <end position="291"/>
    </location>
</feature>
<feature type="region of interest" description="Disordered" evidence="2">
    <location>
        <begin position="293"/>
        <end position="314"/>
    </location>
</feature>
<feature type="binding site" evidence="1">
    <location>
        <begin position="17"/>
        <end position="24"/>
    </location>
    <ligand>
        <name>GTP</name>
        <dbReference type="ChEBI" id="CHEBI:37565"/>
    </ligand>
</feature>
<feature type="binding site" evidence="1">
    <location>
        <begin position="89"/>
        <end position="93"/>
    </location>
    <ligand>
        <name>GTP</name>
        <dbReference type="ChEBI" id="CHEBI:37565"/>
    </ligand>
</feature>
<feature type="binding site" evidence="1">
    <location>
        <begin position="143"/>
        <end position="146"/>
    </location>
    <ligand>
        <name>GTP</name>
        <dbReference type="ChEBI" id="CHEBI:37565"/>
    </ligand>
</feature>
<comment type="function">
    <text evidence="1">Catalyzes the GTP-dependent ribosomal translocation step during translation elongation. During this step, the ribosome changes from the pre-translocational (PRE) to the post-translocational (POST) state as the newly formed A-site-bound peptidyl-tRNA and P-site-bound deacylated tRNA move to the P and E sites, respectively. Catalyzes the coordinated movement of the two tRNA molecules, the mRNA and conformational changes in the ribosome.</text>
</comment>
<comment type="subcellular location">
    <subcellularLocation>
        <location evidence="1">Cytoplasm</location>
    </subcellularLocation>
</comment>
<comment type="similarity">
    <text evidence="1">Belongs to the TRAFAC class translation factor GTPase superfamily. Classic translation factor GTPase family. EF-G/EF-2 subfamily.</text>
</comment>
<sequence length="702" mass="77574">MARTTPIELYRNIGIVAHVDAGKTTTTERILFYTGVNHKMGEVHDGAATMDWMVQEQERGITITSAATTAFWQGSTKQFPHRYRFNIIDTPGHVDFTIEVERSLRVLDGAVVVFSGADGVEPQSETVWRQANKYHVPRLAYVNKMDRQGADFLRVVAQIKQRLGHVPVPIQLAIGSEENFSGQIDLVKMKAIYWNDADQGTSYREEEIPAELRALAEEWRAHMVEAAAEANDELMNKYLEGEELSIEEIKAGLRQRTLANQIVPAVLGSSFKNKGVPLVLDAVIDYLPAPSEIPAIRGTDPDDEEKHDERHADDDEPFSALAFKIATDPFVGTLTFARVYSGVLTSGDAVLNSVKGKKERVGRMVQMHANQRDEIKEVRAGDIAALIGMKDVTTGDTLCAIDKPIILERMDFPDPVISVAVEPKTKADQEKMGIALSKLAQEDPSFRVKTDEETAQTIISGMGELHLDIIVDRMRREFGVEANIGKPQVAYRETIRNTCEIEGKFVRQSGGRGQFGHCWIRFAPADEGQEGLEFHNEVVGGVIPREFIPAIQKGIEDQMQNGVLAGYPLIGLKATVYDGSYHDVDSSEMAFKIAASMATKQLSQKGGAVLLEPVMKVEVVTPEDYMGDVMGDLNRRRGLIQGMEDTPAGKVIRAEVPLGEMFGYATDVRSMSQGRASYSMEFVRYAEVPASVAEGIVARQGR</sequence>
<proteinExistence type="inferred from homology"/>
<gene>
    <name type="primary">fusB</name>
    <name type="synonym">fusA2</name>
    <name type="ordered locus">PA2071</name>
</gene>
<keyword id="KW-0963">Cytoplasm</keyword>
<keyword id="KW-0251">Elongation factor</keyword>
<keyword id="KW-0342">GTP-binding</keyword>
<keyword id="KW-0547">Nucleotide-binding</keyword>
<keyword id="KW-0648">Protein biosynthesis</keyword>
<keyword id="KW-1185">Reference proteome</keyword>
<dbReference type="EMBL" id="AE004091">
    <property type="protein sequence ID" value="AAG05459.1"/>
    <property type="molecule type" value="Genomic_DNA"/>
</dbReference>
<dbReference type="PIR" id="G83386">
    <property type="entry name" value="G83386"/>
</dbReference>
<dbReference type="RefSeq" id="NP_250761.1">
    <property type="nucleotide sequence ID" value="NC_002516.2"/>
</dbReference>
<dbReference type="SMR" id="Q9I244"/>
<dbReference type="FunCoup" id="Q9I244">
    <property type="interactions" value="796"/>
</dbReference>
<dbReference type="STRING" id="208964.PA2071"/>
<dbReference type="PaxDb" id="208964-PA2071"/>
<dbReference type="GeneID" id="879566"/>
<dbReference type="KEGG" id="pae:PA2071"/>
<dbReference type="PATRIC" id="fig|208964.12.peg.2160"/>
<dbReference type="PseudoCAP" id="PA2071"/>
<dbReference type="HOGENOM" id="CLU_002794_4_1_6"/>
<dbReference type="InParanoid" id="Q9I244"/>
<dbReference type="OrthoDB" id="9804431at2"/>
<dbReference type="PhylomeDB" id="Q9I244"/>
<dbReference type="BioCyc" id="PAER208964:G1FZ6-2109-MONOMER"/>
<dbReference type="Proteomes" id="UP000002438">
    <property type="component" value="Chromosome"/>
</dbReference>
<dbReference type="GO" id="GO:0005829">
    <property type="term" value="C:cytosol"/>
    <property type="evidence" value="ECO:0000318"/>
    <property type="project" value="GO_Central"/>
</dbReference>
<dbReference type="GO" id="GO:0005525">
    <property type="term" value="F:GTP binding"/>
    <property type="evidence" value="ECO:0007669"/>
    <property type="project" value="UniProtKB-UniRule"/>
</dbReference>
<dbReference type="GO" id="GO:0003924">
    <property type="term" value="F:GTPase activity"/>
    <property type="evidence" value="ECO:0007669"/>
    <property type="project" value="InterPro"/>
</dbReference>
<dbReference type="GO" id="GO:0097216">
    <property type="term" value="F:guanosine tetraphosphate binding"/>
    <property type="evidence" value="ECO:0007669"/>
    <property type="project" value="UniProtKB-ARBA"/>
</dbReference>
<dbReference type="GO" id="GO:0003746">
    <property type="term" value="F:translation elongation factor activity"/>
    <property type="evidence" value="ECO:0007669"/>
    <property type="project" value="UniProtKB-UniRule"/>
</dbReference>
<dbReference type="GO" id="GO:0032790">
    <property type="term" value="P:ribosome disassembly"/>
    <property type="evidence" value="ECO:0000318"/>
    <property type="project" value="GO_Central"/>
</dbReference>
<dbReference type="CDD" id="cd01886">
    <property type="entry name" value="EF-G"/>
    <property type="match status" value="1"/>
</dbReference>
<dbReference type="CDD" id="cd16262">
    <property type="entry name" value="EFG_III"/>
    <property type="match status" value="1"/>
</dbReference>
<dbReference type="CDD" id="cd01434">
    <property type="entry name" value="EFG_mtEFG1_IV"/>
    <property type="match status" value="1"/>
</dbReference>
<dbReference type="CDD" id="cd03713">
    <property type="entry name" value="EFG_mtEFG_C"/>
    <property type="match status" value="1"/>
</dbReference>
<dbReference type="CDD" id="cd04088">
    <property type="entry name" value="EFG_mtEFG_II"/>
    <property type="match status" value="1"/>
</dbReference>
<dbReference type="FunFam" id="2.40.30.10:FF:000006">
    <property type="entry name" value="Elongation factor G"/>
    <property type="match status" value="1"/>
</dbReference>
<dbReference type="FunFam" id="3.30.230.10:FF:000003">
    <property type="entry name" value="Elongation factor G"/>
    <property type="match status" value="1"/>
</dbReference>
<dbReference type="FunFam" id="3.30.70.240:FF:000001">
    <property type="entry name" value="Elongation factor G"/>
    <property type="match status" value="1"/>
</dbReference>
<dbReference type="FunFam" id="3.30.70.870:FF:000001">
    <property type="entry name" value="Elongation factor G"/>
    <property type="match status" value="1"/>
</dbReference>
<dbReference type="FunFam" id="3.40.50.300:FF:000029">
    <property type="entry name" value="Elongation factor G"/>
    <property type="match status" value="1"/>
</dbReference>
<dbReference type="Gene3D" id="3.30.230.10">
    <property type="match status" value="1"/>
</dbReference>
<dbReference type="Gene3D" id="3.30.70.240">
    <property type="match status" value="1"/>
</dbReference>
<dbReference type="Gene3D" id="3.30.70.870">
    <property type="entry name" value="Elongation Factor G (Translational Gtpase), domain 3"/>
    <property type="match status" value="1"/>
</dbReference>
<dbReference type="Gene3D" id="3.40.50.300">
    <property type="entry name" value="P-loop containing nucleotide triphosphate hydrolases"/>
    <property type="match status" value="1"/>
</dbReference>
<dbReference type="Gene3D" id="2.40.30.10">
    <property type="entry name" value="Translation factors"/>
    <property type="match status" value="1"/>
</dbReference>
<dbReference type="HAMAP" id="MF_00054_B">
    <property type="entry name" value="EF_G_EF_2_B"/>
    <property type="match status" value="1"/>
</dbReference>
<dbReference type="InterPro" id="IPR041095">
    <property type="entry name" value="EFG_II"/>
</dbReference>
<dbReference type="InterPro" id="IPR009022">
    <property type="entry name" value="EFG_III"/>
</dbReference>
<dbReference type="InterPro" id="IPR035647">
    <property type="entry name" value="EFG_III/V"/>
</dbReference>
<dbReference type="InterPro" id="IPR047872">
    <property type="entry name" value="EFG_IV"/>
</dbReference>
<dbReference type="InterPro" id="IPR035649">
    <property type="entry name" value="EFG_V"/>
</dbReference>
<dbReference type="InterPro" id="IPR000640">
    <property type="entry name" value="EFG_V-like"/>
</dbReference>
<dbReference type="InterPro" id="IPR004161">
    <property type="entry name" value="EFTu-like_2"/>
</dbReference>
<dbReference type="InterPro" id="IPR031157">
    <property type="entry name" value="G_TR_CS"/>
</dbReference>
<dbReference type="InterPro" id="IPR027417">
    <property type="entry name" value="P-loop_NTPase"/>
</dbReference>
<dbReference type="InterPro" id="IPR020568">
    <property type="entry name" value="Ribosomal_Su5_D2-typ_SF"/>
</dbReference>
<dbReference type="InterPro" id="IPR014721">
    <property type="entry name" value="Ribsml_uS5_D2-typ_fold_subgr"/>
</dbReference>
<dbReference type="InterPro" id="IPR005225">
    <property type="entry name" value="Small_GTP-bd"/>
</dbReference>
<dbReference type="InterPro" id="IPR000795">
    <property type="entry name" value="T_Tr_GTP-bd_dom"/>
</dbReference>
<dbReference type="InterPro" id="IPR009000">
    <property type="entry name" value="Transl_B-barrel_sf"/>
</dbReference>
<dbReference type="InterPro" id="IPR004540">
    <property type="entry name" value="Transl_elong_EFG/EF2"/>
</dbReference>
<dbReference type="InterPro" id="IPR005517">
    <property type="entry name" value="Transl_elong_EFG/EF2_IV"/>
</dbReference>
<dbReference type="NCBIfam" id="TIGR00484">
    <property type="entry name" value="EF-G"/>
    <property type="match status" value="1"/>
</dbReference>
<dbReference type="NCBIfam" id="NF009381">
    <property type="entry name" value="PRK12740.1-5"/>
    <property type="match status" value="1"/>
</dbReference>
<dbReference type="NCBIfam" id="TIGR00231">
    <property type="entry name" value="small_GTP"/>
    <property type="match status" value="1"/>
</dbReference>
<dbReference type="PANTHER" id="PTHR43261:SF1">
    <property type="entry name" value="RIBOSOME-RELEASING FACTOR 2, MITOCHONDRIAL"/>
    <property type="match status" value="1"/>
</dbReference>
<dbReference type="PANTHER" id="PTHR43261">
    <property type="entry name" value="TRANSLATION ELONGATION FACTOR G-RELATED"/>
    <property type="match status" value="1"/>
</dbReference>
<dbReference type="Pfam" id="PF00679">
    <property type="entry name" value="EFG_C"/>
    <property type="match status" value="1"/>
</dbReference>
<dbReference type="Pfam" id="PF14492">
    <property type="entry name" value="EFG_III"/>
    <property type="match status" value="1"/>
</dbReference>
<dbReference type="Pfam" id="PF03764">
    <property type="entry name" value="EFG_IV"/>
    <property type="match status" value="1"/>
</dbReference>
<dbReference type="Pfam" id="PF00009">
    <property type="entry name" value="GTP_EFTU"/>
    <property type="match status" value="1"/>
</dbReference>
<dbReference type="Pfam" id="PF03144">
    <property type="entry name" value="GTP_EFTU_D2"/>
    <property type="match status" value="1"/>
</dbReference>
<dbReference type="PRINTS" id="PR00315">
    <property type="entry name" value="ELONGATNFCT"/>
</dbReference>
<dbReference type="SMART" id="SM00838">
    <property type="entry name" value="EFG_C"/>
    <property type="match status" value="1"/>
</dbReference>
<dbReference type="SMART" id="SM00889">
    <property type="entry name" value="EFG_IV"/>
    <property type="match status" value="1"/>
</dbReference>
<dbReference type="SUPFAM" id="SSF54980">
    <property type="entry name" value="EF-G C-terminal domain-like"/>
    <property type="match status" value="2"/>
</dbReference>
<dbReference type="SUPFAM" id="SSF52540">
    <property type="entry name" value="P-loop containing nucleoside triphosphate hydrolases"/>
    <property type="match status" value="1"/>
</dbReference>
<dbReference type="SUPFAM" id="SSF54211">
    <property type="entry name" value="Ribosomal protein S5 domain 2-like"/>
    <property type="match status" value="1"/>
</dbReference>
<dbReference type="SUPFAM" id="SSF50447">
    <property type="entry name" value="Translation proteins"/>
    <property type="match status" value="1"/>
</dbReference>
<dbReference type="PROSITE" id="PS00301">
    <property type="entry name" value="G_TR_1"/>
    <property type="match status" value="1"/>
</dbReference>
<dbReference type="PROSITE" id="PS51722">
    <property type="entry name" value="G_TR_2"/>
    <property type="match status" value="1"/>
</dbReference>